<feature type="chain" id="PRO_1000197041" description="tRNA modification GTPase MnmE">
    <location>
        <begin position="1"/>
        <end position="464"/>
    </location>
</feature>
<feature type="domain" description="TrmE-type G">
    <location>
        <begin position="227"/>
        <end position="385"/>
    </location>
</feature>
<feature type="binding site" evidence="1">
    <location>
        <position position="26"/>
    </location>
    <ligand>
        <name>(6S)-5-formyl-5,6,7,8-tetrahydrofolate</name>
        <dbReference type="ChEBI" id="CHEBI:57457"/>
    </ligand>
</feature>
<feature type="binding site" evidence="1">
    <location>
        <position position="92"/>
    </location>
    <ligand>
        <name>(6S)-5-formyl-5,6,7,8-tetrahydrofolate</name>
        <dbReference type="ChEBI" id="CHEBI:57457"/>
    </ligand>
</feature>
<feature type="binding site" evidence="1">
    <location>
        <position position="131"/>
    </location>
    <ligand>
        <name>(6S)-5-formyl-5,6,7,8-tetrahydrofolate</name>
        <dbReference type="ChEBI" id="CHEBI:57457"/>
    </ligand>
</feature>
<feature type="binding site" evidence="1">
    <location>
        <begin position="237"/>
        <end position="242"/>
    </location>
    <ligand>
        <name>GTP</name>
        <dbReference type="ChEBI" id="CHEBI:37565"/>
    </ligand>
</feature>
<feature type="binding site" evidence="1">
    <location>
        <position position="237"/>
    </location>
    <ligand>
        <name>K(+)</name>
        <dbReference type="ChEBI" id="CHEBI:29103"/>
    </ligand>
</feature>
<feature type="binding site" evidence="1">
    <location>
        <position position="241"/>
    </location>
    <ligand>
        <name>Mg(2+)</name>
        <dbReference type="ChEBI" id="CHEBI:18420"/>
    </ligand>
</feature>
<feature type="binding site" evidence="1">
    <location>
        <begin position="256"/>
        <end position="262"/>
    </location>
    <ligand>
        <name>GTP</name>
        <dbReference type="ChEBI" id="CHEBI:37565"/>
    </ligand>
</feature>
<feature type="binding site" evidence="1">
    <location>
        <position position="256"/>
    </location>
    <ligand>
        <name>K(+)</name>
        <dbReference type="ChEBI" id="CHEBI:29103"/>
    </ligand>
</feature>
<feature type="binding site" evidence="1">
    <location>
        <position position="258"/>
    </location>
    <ligand>
        <name>K(+)</name>
        <dbReference type="ChEBI" id="CHEBI:29103"/>
    </ligand>
</feature>
<feature type="binding site" evidence="1">
    <location>
        <position position="261"/>
    </location>
    <ligand>
        <name>K(+)</name>
        <dbReference type="ChEBI" id="CHEBI:29103"/>
    </ligand>
</feature>
<feature type="binding site" evidence="1">
    <location>
        <position position="262"/>
    </location>
    <ligand>
        <name>Mg(2+)</name>
        <dbReference type="ChEBI" id="CHEBI:18420"/>
    </ligand>
</feature>
<feature type="binding site" evidence="1">
    <location>
        <begin position="281"/>
        <end position="284"/>
    </location>
    <ligand>
        <name>GTP</name>
        <dbReference type="ChEBI" id="CHEBI:37565"/>
    </ligand>
</feature>
<feature type="binding site" evidence="1">
    <location>
        <position position="464"/>
    </location>
    <ligand>
        <name>(6S)-5-formyl-5,6,7,8-tetrahydrofolate</name>
        <dbReference type="ChEBI" id="CHEBI:57457"/>
    </ligand>
</feature>
<proteinExistence type="inferred from homology"/>
<comment type="function">
    <text evidence="1">Exhibits a very high intrinsic GTPase hydrolysis rate. Involved in the addition of a carboxymethylaminomethyl (cmnm) group at the wobble position (U34) of certain tRNAs, forming tRNA-cmnm(5)s(2)U34.</text>
</comment>
<comment type="cofactor">
    <cofactor evidence="1">
        <name>K(+)</name>
        <dbReference type="ChEBI" id="CHEBI:29103"/>
    </cofactor>
    <text evidence="1">Binds 1 potassium ion per subunit.</text>
</comment>
<comment type="subunit">
    <text evidence="1">Homodimer. Heterotetramer of two MnmE and two MnmG subunits.</text>
</comment>
<comment type="subcellular location">
    <subcellularLocation>
        <location evidence="1">Cytoplasm</location>
    </subcellularLocation>
</comment>
<comment type="similarity">
    <text evidence="1">Belongs to the TRAFAC class TrmE-Era-EngA-EngB-Septin-like GTPase superfamily. TrmE GTPase family.</text>
</comment>
<organism>
    <name type="scientific">Brachyspira hyodysenteriae (strain ATCC 49526 / WA1)</name>
    <dbReference type="NCBI Taxonomy" id="565034"/>
    <lineage>
        <taxon>Bacteria</taxon>
        <taxon>Pseudomonadati</taxon>
        <taxon>Spirochaetota</taxon>
        <taxon>Spirochaetia</taxon>
        <taxon>Brachyspirales</taxon>
        <taxon>Brachyspiraceae</taxon>
        <taxon>Brachyspira</taxon>
    </lineage>
</organism>
<dbReference type="EC" id="3.6.-.-" evidence="1"/>
<dbReference type="EMBL" id="CP001357">
    <property type="protein sequence ID" value="ACN82837.1"/>
    <property type="molecule type" value="Genomic_DNA"/>
</dbReference>
<dbReference type="RefSeq" id="WP_012669890.1">
    <property type="nucleotide sequence ID" value="NC_012225.1"/>
</dbReference>
<dbReference type="SMR" id="C0QXH9"/>
<dbReference type="STRING" id="565034.BHWA1_00337"/>
<dbReference type="KEGG" id="bhy:BHWA1_00337"/>
<dbReference type="eggNOG" id="COG0486">
    <property type="taxonomic scope" value="Bacteria"/>
</dbReference>
<dbReference type="HOGENOM" id="CLU_019624_4_1_12"/>
<dbReference type="Proteomes" id="UP000001803">
    <property type="component" value="Chromosome"/>
</dbReference>
<dbReference type="GO" id="GO:0005737">
    <property type="term" value="C:cytoplasm"/>
    <property type="evidence" value="ECO:0007669"/>
    <property type="project" value="UniProtKB-SubCell"/>
</dbReference>
<dbReference type="GO" id="GO:0005525">
    <property type="term" value="F:GTP binding"/>
    <property type="evidence" value="ECO:0007669"/>
    <property type="project" value="UniProtKB-UniRule"/>
</dbReference>
<dbReference type="GO" id="GO:0003924">
    <property type="term" value="F:GTPase activity"/>
    <property type="evidence" value="ECO:0007669"/>
    <property type="project" value="UniProtKB-UniRule"/>
</dbReference>
<dbReference type="GO" id="GO:0046872">
    <property type="term" value="F:metal ion binding"/>
    <property type="evidence" value="ECO:0007669"/>
    <property type="project" value="UniProtKB-KW"/>
</dbReference>
<dbReference type="GO" id="GO:0030488">
    <property type="term" value="P:tRNA methylation"/>
    <property type="evidence" value="ECO:0007669"/>
    <property type="project" value="TreeGrafter"/>
</dbReference>
<dbReference type="GO" id="GO:0002098">
    <property type="term" value="P:tRNA wobble uridine modification"/>
    <property type="evidence" value="ECO:0007669"/>
    <property type="project" value="TreeGrafter"/>
</dbReference>
<dbReference type="CDD" id="cd04164">
    <property type="entry name" value="trmE"/>
    <property type="match status" value="1"/>
</dbReference>
<dbReference type="CDD" id="cd14858">
    <property type="entry name" value="TrmE_N"/>
    <property type="match status" value="1"/>
</dbReference>
<dbReference type="Gene3D" id="3.40.50.300">
    <property type="entry name" value="P-loop containing nucleotide triphosphate hydrolases"/>
    <property type="match status" value="1"/>
</dbReference>
<dbReference type="Gene3D" id="3.30.1360.120">
    <property type="entry name" value="Probable tRNA modification gtpase trme, domain 1"/>
    <property type="match status" value="1"/>
</dbReference>
<dbReference type="Gene3D" id="1.20.120.430">
    <property type="entry name" value="tRNA modification GTPase MnmE domain 2"/>
    <property type="match status" value="1"/>
</dbReference>
<dbReference type="HAMAP" id="MF_00379">
    <property type="entry name" value="GTPase_MnmE"/>
    <property type="match status" value="1"/>
</dbReference>
<dbReference type="InterPro" id="IPR031168">
    <property type="entry name" value="G_TrmE"/>
</dbReference>
<dbReference type="InterPro" id="IPR006073">
    <property type="entry name" value="GTP-bd"/>
</dbReference>
<dbReference type="InterPro" id="IPR018948">
    <property type="entry name" value="GTP-bd_TrmE_N"/>
</dbReference>
<dbReference type="InterPro" id="IPR004520">
    <property type="entry name" value="GTPase_MnmE"/>
</dbReference>
<dbReference type="InterPro" id="IPR027368">
    <property type="entry name" value="MnmE_dom2"/>
</dbReference>
<dbReference type="InterPro" id="IPR025867">
    <property type="entry name" value="MnmE_helical"/>
</dbReference>
<dbReference type="InterPro" id="IPR027417">
    <property type="entry name" value="P-loop_NTPase"/>
</dbReference>
<dbReference type="InterPro" id="IPR005225">
    <property type="entry name" value="Small_GTP-bd"/>
</dbReference>
<dbReference type="InterPro" id="IPR027266">
    <property type="entry name" value="TrmE/GcvT_dom1"/>
</dbReference>
<dbReference type="NCBIfam" id="TIGR00450">
    <property type="entry name" value="mnmE_trmE_thdF"/>
    <property type="match status" value="1"/>
</dbReference>
<dbReference type="NCBIfam" id="TIGR00231">
    <property type="entry name" value="small_GTP"/>
    <property type="match status" value="1"/>
</dbReference>
<dbReference type="PANTHER" id="PTHR42714">
    <property type="entry name" value="TRNA MODIFICATION GTPASE GTPBP3"/>
    <property type="match status" value="1"/>
</dbReference>
<dbReference type="PANTHER" id="PTHR42714:SF2">
    <property type="entry name" value="TRNA MODIFICATION GTPASE GTPBP3, MITOCHONDRIAL"/>
    <property type="match status" value="1"/>
</dbReference>
<dbReference type="Pfam" id="PF01926">
    <property type="entry name" value="MMR_HSR1"/>
    <property type="match status" value="1"/>
</dbReference>
<dbReference type="Pfam" id="PF12631">
    <property type="entry name" value="MnmE_helical"/>
    <property type="match status" value="1"/>
</dbReference>
<dbReference type="Pfam" id="PF10396">
    <property type="entry name" value="TrmE_N"/>
    <property type="match status" value="1"/>
</dbReference>
<dbReference type="SUPFAM" id="SSF52540">
    <property type="entry name" value="P-loop containing nucleoside triphosphate hydrolases"/>
    <property type="match status" value="1"/>
</dbReference>
<dbReference type="PROSITE" id="PS51709">
    <property type="entry name" value="G_TRME"/>
    <property type="match status" value="1"/>
</dbReference>
<reference key="1">
    <citation type="journal article" date="2009" name="PLoS ONE">
        <title>Genome sequence of the pathogenic intestinal spirochete Brachyspira hyodysenteriae reveals adaptations to its lifestyle in the porcine large intestine.</title>
        <authorList>
            <person name="Bellgard M.I."/>
            <person name="Wanchanthuek P."/>
            <person name="La T."/>
            <person name="Ryan K."/>
            <person name="Moolhuijzen P."/>
            <person name="Albertyn Z."/>
            <person name="Shaban B."/>
            <person name="Motro Y."/>
            <person name="Dunn D.S."/>
            <person name="Schibeci D."/>
            <person name="Hunter A."/>
            <person name="Barrero R."/>
            <person name="Phillips N.D."/>
            <person name="Hampson D.J."/>
        </authorList>
    </citation>
    <scope>NUCLEOTIDE SEQUENCE [LARGE SCALE GENOMIC DNA]</scope>
    <source>
        <strain>ATCC 49526 / WA1</strain>
    </source>
</reference>
<name>MNME_BRAHW</name>
<protein>
    <recommendedName>
        <fullName evidence="1">tRNA modification GTPase MnmE</fullName>
        <ecNumber evidence="1">3.6.-.-</ecNumber>
    </recommendedName>
</protein>
<gene>
    <name evidence="1" type="primary">mnmE</name>
    <name evidence="1" type="synonym">trmE</name>
    <name type="ordered locus">BHWA1_00337</name>
</gene>
<sequence>MNEYDIKDTIAALSTPYSKSALAIIRMSGSKALEIASKICFYANNENKNINNFEHRKSYYALIKDENNIPVDEVIVLSSLSPNTFTSEDTIEFISHGSIVVIDALMNLLIKNGARAANRGEFTYRAYINGRIGISEAEAIHDLIDSNNKLMAEASIYKMRGRLTREIDKLRENIKNSLMLVYGELDFPEDETESFSYDKLIENFEIIKKDIENILSNSKRVENLINGIKVAILGRVNAGKSSIFNMILDRERAIVSNIAGTTRDFLSENIYIENIPFYLMDTAGFHKKADNDIELEGIERAKKCAYESDIILAVFDGSDIANEDDINLIEFLNALENKNIIYILNKSDEDKKFNKEIDNANIINISTKTKDGKDKLISALKDYVSDSDMDIFNKETYVNNRERCYLENGLKQIDICIKKSLESYSLDEVAEEMNILNNILGNVSGKVDAEEVINEIFANFCIGK</sequence>
<accession>C0QXH9</accession>
<evidence type="ECO:0000255" key="1">
    <source>
        <dbReference type="HAMAP-Rule" id="MF_00379"/>
    </source>
</evidence>
<keyword id="KW-0963">Cytoplasm</keyword>
<keyword id="KW-0342">GTP-binding</keyword>
<keyword id="KW-0378">Hydrolase</keyword>
<keyword id="KW-0460">Magnesium</keyword>
<keyword id="KW-0479">Metal-binding</keyword>
<keyword id="KW-0547">Nucleotide-binding</keyword>
<keyword id="KW-0630">Potassium</keyword>
<keyword id="KW-0819">tRNA processing</keyword>